<organism>
    <name type="scientific">Rhodococcus jostii (strain RHA1)</name>
    <dbReference type="NCBI Taxonomy" id="101510"/>
    <lineage>
        <taxon>Bacteria</taxon>
        <taxon>Bacillati</taxon>
        <taxon>Actinomycetota</taxon>
        <taxon>Actinomycetes</taxon>
        <taxon>Mycobacteriales</taxon>
        <taxon>Nocardiaceae</taxon>
        <taxon>Rhodococcus</taxon>
    </lineage>
</organism>
<proteinExistence type="inferred from homology"/>
<keyword id="KW-0030">Aminoacyl-tRNA synthetase</keyword>
<keyword id="KW-0067">ATP-binding</keyword>
<keyword id="KW-0963">Cytoplasm</keyword>
<keyword id="KW-0436">Ligase</keyword>
<keyword id="KW-0547">Nucleotide-binding</keyword>
<keyword id="KW-0648">Protein biosynthesis</keyword>
<sequence>MARDERGVTAQSEDFAAWYNEVVFKAGLVDRGPAKGTMVIRPYGYRLWELLQSELDRRIKDTGHENAYFPLLIPESYLGREAEHVEGFSPELAVVTHVGGKVLEEPLVVRPTSETIIGEMMAKWISSHRDLPLLLNQWANVVRWELRPRMFLRTTEFLWQEGHTAHVDEASARRETMLALDIYHEVARELAAIPVVPGEKTPGERFAGAVATYTIEGMMRDGRALQSGTSHYMGIKFASAFDIRFTSETGREELCHTTSWGMSTRMIGGIVMTHGDDKGLVFPPRLAPHQVVIVPITRGGNVAVEGAADELAHRLRSVGVRTHVDARPHLTPGFKYNEWEMRGVPVRLELGPRDLEDGTVMMVKRLGDDGKQAVPIDSLPEAMPGVLDDFQAFLLARATAFRDGHARTVDNWTDFADAVSTGWALALHCGIAACEEEIKSLTAATPRCVPLGGEPETGVCVRCGAASAYGKRVIFGRAY</sequence>
<protein>
    <recommendedName>
        <fullName evidence="1">Proline--tRNA ligase 2</fullName>
        <ecNumber evidence="1">6.1.1.15</ecNumber>
    </recommendedName>
    <alternativeName>
        <fullName evidence="1">Prolyl-tRNA synthetase 2</fullName>
        <shortName evidence="1">ProRS 2</shortName>
    </alternativeName>
</protein>
<feature type="chain" id="PRO_0000288413" description="Proline--tRNA ligase 2">
    <location>
        <begin position="1"/>
        <end position="479"/>
    </location>
</feature>
<name>SYP2_RHOJR</name>
<gene>
    <name evidence="1" type="primary">proS2</name>
    <name type="ordered locus">RHA1_ro03499</name>
</gene>
<accession>Q0SAY4</accession>
<comment type="function">
    <text evidence="1">Catalyzes the attachment of proline to tRNA(Pro) in a two-step reaction: proline is first activated by ATP to form Pro-AMP and then transferred to the acceptor end of tRNA(Pro).</text>
</comment>
<comment type="catalytic activity">
    <reaction evidence="1">
        <text>tRNA(Pro) + L-proline + ATP = L-prolyl-tRNA(Pro) + AMP + diphosphate</text>
        <dbReference type="Rhea" id="RHEA:14305"/>
        <dbReference type="Rhea" id="RHEA-COMP:9700"/>
        <dbReference type="Rhea" id="RHEA-COMP:9702"/>
        <dbReference type="ChEBI" id="CHEBI:30616"/>
        <dbReference type="ChEBI" id="CHEBI:33019"/>
        <dbReference type="ChEBI" id="CHEBI:60039"/>
        <dbReference type="ChEBI" id="CHEBI:78442"/>
        <dbReference type="ChEBI" id="CHEBI:78532"/>
        <dbReference type="ChEBI" id="CHEBI:456215"/>
        <dbReference type="EC" id="6.1.1.15"/>
    </reaction>
</comment>
<comment type="subunit">
    <text evidence="1">Homodimer.</text>
</comment>
<comment type="subcellular location">
    <subcellularLocation>
        <location evidence="1">Cytoplasm</location>
    </subcellularLocation>
</comment>
<comment type="domain">
    <text evidence="1">Consists of three domains: the N-terminal catalytic domain, the anticodon-binding domain and the C-terminal extension.</text>
</comment>
<comment type="similarity">
    <text evidence="1">Belongs to the class-II aminoacyl-tRNA synthetase family. ProS type 3 subfamily.</text>
</comment>
<comment type="sequence caution" evidence="2">
    <conflict type="erroneous initiation">
        <sequence resource="EMBL-CDS" id="ABG95302"/>
    </conflict>
</comment>
<evidence type="ECO:0000255" key="1">
    <source>
        <dbReference type="HAMAP-Rule" id="MF_01571"/>
    </source>
</evidence>
<evidence type="ECO:0000305" key="2"/>
<reference key="1">
    <citation type="journal article" date="2006" name="Proc. Natl. Acad. Sci. U.S.A.">
        <title>The complete genome of Rhodococcus sp. RHA1 provides insights into a catabolic powerhouse.</title>
        <authorList>
            <person name="McLeod M.P."/>
            <person name="Warren R.L."/>
            <person name="Hsiao W.W.L."/>
            <person name="Araki N."/>
            <person name="Myhre M."/>
            <person name="Fernandes C."/>
            <person name="Miyazawa D."/>
            <person name="Wong W."/>
            <person name="Lillquist A.L."/>
            <person name="Wang D."/>
            <person name="Dosanjh M."/>
            <person name="Hara H."/>
            <person name="Petrescu A."/>
            <person name="Morin R.D."/>
            <person name="Yang G."/>
            <person name="Stott J.M."/>
            <person name="Schein J.E."/>
            <person name="Shin H."/>
            <person name="Smailus D."/>
            <person name="Siddiqui A.S."/>
            <person name="Marra M.A."/>
            <person name="Jones S.J.M."/>
            <person name="Holt R."/>
            <person name="Brinkman F.S.L."/>
            <person name="Miyauchi K."/>
            <person name="Fukuda M."/>
            <person name="Davies J.E."/>
            <person name="Mohn W.W."/>
            <person name="Eltis L.D."/>
        </authorList>
    </citation>
    <scope>NUCLEOTIDE SEQUENCE [LARGE SCALE GENOMIC DNA]</scope>
    <source>
        <strain>RHA1</strain>
    </source>
</reference>
<dbReference type="EC" id="6.1.1.15" evidence="1"/>
<dbReference type="EMBL" id="CP000431">
    <property type="protein sequence ID" value="ABG95302.1"/>
    <property type="status" value="ALT_INIT"/>
    <property type="molecule type" value="Genomic_DNA"/>
</dbReference>
<dbReference type="RefSeq" id="WP_050787323.1">
    <property type="nucleotide sequence ID" value="NC_008268.1"/>
</dbReference>
<dbReference type="SMR" id="Q0SAY4"/>
<dbReference type="KEGG" id="rha:RHA1_ro03499"/>
<dbReference type="PATRIC" id="fig|101510.16.peg.3532"/>
<dbReference type="eggNOG" id="COG0442">
    <property type="taxonomic scope" value="Bacteria"/>
</dbReference>
<dbReference type="HOGENOM" id="CLU_001882_4_2_11"/>
<dbReference type="OrthoDB" id="9809052at2"/>
<dbReference type="Proteomes" id="UP000008710">
    <property type="component" value="Chromosome"/>
</dbReference>
<dbReference type="GO" id="GO:0017101">
    <property type="term" value="C:aminoacyl-tRNA synthetase multienzyme complex"/>
    <property type="evidence" value="ECO:0007669"/>
    <property type="project" value="TreeGrafter"/>
</dbReference>
<dbReference type="GO" id="GO:0005737">
    <property type="term" value="C:cytoplasm"/>
    <property type="evidence" value="ECO:0007669"/>
    <property type="project" value="UniProtKB-SubCell"/>
</dbReference>
<dbReference type="GO" id="GO:0005524">
    <property type="term" value="F:ATP binding"/>
    <property type="evidence" value="ECO:0007669"/>
    <property type="project" value="UniProtKB-UniRule"/>
</dbReference>
<dbReference type="GO" id="GO:0004827">
    <property type="term" value="F:proline-tRNA ligase activity"/>
    <property type="evidence" value="ECO:0007669"/>
    <property type="project" value="UniProtKB-UniRule"/>
</dbReference>
<dbReference type="GO" id="GO:0006433">
    <property type="term" value="P:prolyl-tRNA aminoacylation"/>
    <property type="evidence" value="ECO:0007669"/>
    <property type="project" value="UniProtKB-UniRule"/>
</dbReference>
<dbReference type="CDD" id="cd00862">
    <property type="entry name" value="ProRS_anticodon_zinc"/>
    <property type="match status" value="1"/>
</dbReference>
<dbReference type="CDD" id="cd00778">
    <property type="entry name" value="ProRS_core_arch_euk"/>
    <property type="match status" value="1"/>
</dbReference>
<dbReference type="FunFam" id="3.30.930.10:FF:000037">
    <property type="entry name" value="Proline--tRNA ligase"/>
    <property type="match status" value="1"/>
</dbReference>
<dbReference type="Gene3D" id="3.40.50.800">
    <property type="entry name" value="Anticodon-binding domain"/>
    <property type="match status" value="1"/>
</dbReference>
<dbReference type="Gene3D" id="3.30.930.10">
    <property type="entry name" value="Bira Bifunctional Protein, Domain 2"/>
    <property type="match status" value="1"/>
</dbReference>
<dbReference type="Gene3D" id="3.30.110.30">
    <property type="entry name" value="C-terminal domain of ProRS"/>
    <property type="match status" value="1"/>
</dbReference>
<dbReference type="HAMAP" id="MF_01571">
    <property type="entry name" value="Pro_tRNA_synth_type3"/>
    <property type="match status" value="1"/>
</dbReference>
<dbReference type="InterPro" id="IPR002314">
    <property type="entry name" value="aa-tRNA-synt_IIb"/>
</dbReference>
<dbReference type="InterPro" id="IPR006195">
    <property type="entry name" value="aa-tRNA-synth_II"/>
</dbReference>
<dbReference type="InterPro" id="IPR045864">
    <property type="entry name" value="aa-tRNA-synth_II/BPL/LPL"/>
</dbReference>
<dbReference type="InterPro" id="IPR004154">
    <property type="entry name" value="Anticodon-bd"/>
</dbReference>
<dbReference type="InterPro" id="IPR036621">
    <property type="entry name" value="Anticodon-bd_dom_sf"/>
</dbReference>
<dbReference type="InterPro" id="IPR002316">
    <property type="entry name" value="Pro-tRNA-ligase_IIa"/>
</dbReference>
<dbReference type="InterPro" id="IPR004499">
    <property type="entry name" value="Pro-tRNA-ligase_IIa_arc-type"/>
</dbReference>
<dbReference type="InterPro" id="IPR016061">
    <property type="entry name" value="Pro-tRNA_ligase_II_C"/>
</dbReference>
<dbReference type="InterPro" id="IPR017449">
    <property type="entry name" value="Pro-tRNA_synth_II"/>
</dbReference>
<dbReference type="InterPro" id="IPR033721">
    <property type="entry name" value="ProRS_core_arch_euk"/>
</dbReference>
<dbReference type="NCBIfam" id="TIGR00408">
    <property type="entry name" value="proS_fam_I"/>
    <property type="match status" value="1"/>
</dbReference>
<dbReference type="PANTHER" id="PTHR43382:SF2">
    <property type="entry name" value="BIFUNCTIONAL GLUTAMATE_PROLINE--TRNA LIGASE"/>
    <property type="match status" value="1"/>
</dbReference>
<dbReference type="PANTHER" id="PTHR43382">
    <property type="entry name" value="PROLYL-TRNA SYNTHETASE"/>
    <property type="match status" value="1"/>
</dbReference>
<dbReference type="Pfam" id="PF03129">
    <property type="entry name" value="HGTP_anticodon"/>
    <property type="match status" value="1"/>
</dbReference>
<dbReference type="Pfam" id="PF09180">
    <property type="entry name" value="ProRS-C_1"/>
    <property type="match status" value="1"/>
</dbReference>
<dbReference type="Pfam" id="PF00587">
    <property type="entry name" value="tRNA-synt_2b"/>
    <property type="match status" value="1"/>
</dbReference>
<dbReference type="PRINTS" id="PR01046">
    <property type="entry name" value="TRNASYNTHPRO"/>
</dbReference>
<dbReference type="SMART" id="SM00946">
    <property type="entry name" value="ProRS-C_1"/>
    <property type="match status" value="1"/>
</dbReference>
<dbReference type="SUPFAM" id="SSF64586">
    <property type="entry name" value="C-terminal domain of ProRS"/>
    <property type="match status" value="1"/>
</dbReference>
<dbReference type="SUPFAM" id="SSF52954">
    <property type="entry name" value="Class II aaRS ABD-related"/>
    <property type="match status" value="1"/>
</dbReference>
<dbReference type="SUPFAM" id="SSF55681">
    <property type="entry name" value="Class II aaRS and biotin synthetases"/>
    <property type="match status" value="1"/>
</dbReference>
<dbReference type="PROSITE" id="PS50862">
    <property type="entry name" value="AA_TRNA_LIGASE_II"/>
    <property type="match status" value="1"/>
</dbReference>